<dbReference type="EC" id="3.6.5.4" evidence="3"/>
<dbReference type="EMBL" id="AB168231">
    <property type="protein sequence ID" value="BAE00356.1"/>
    <property type="molecule type" value="mRNA"/>
</dbReference>
<dbReference type="RefSeq" id="NP_001270849.1">
    <property type="nucleotide sequence ID" value="NM_001283920.1"/>
</dbReference>
<dbReference type="RefSeq" id="XP_005561120.1">
    <property type="nucleotide sequence ID" value="XM_005561063.2"/>
</dbReference>
<dbReference type="RefSeq" id="XP_005561122.1">
    <property type="nucleotide sequence ID" value="XM_005561065.2"/>
</dbReference>
<dbReference type="RefSeq" id="XP_015308738.1">
    <property type="nucleotide sequence ID" value="XM_015453252.3"/>
</dbReference>
<dbReference type="RefSeq" id="XP_015308739.1">
    <property type="nucleotide sequence ID" value="XM_015453253.3"/>
</dbReference>
<dbReference type="RefSeq" id="XP_045253461.1">
    <property type="nucleotide sequence ID" value="XM_045397526.2"/>
</dbReference>
<dbReference type="RefSeq" id="XP_065403562.1">
    <property type="nucleotide sequence ID" value="XM_065547490.1"/>
</dbReference>
<dbReference type="RefSeq" id="XP_065403564.1">
    <property type="nucleotide sequence ID" value="XM_065547492.1"/>
</dbReference>
<dbReference type="RefSeq" id="XP_065403565.1">
    <property type="nucleotide sequence ID" value="XM_065547493.1"/>
</dbReference>
<dbReference type="SMR" id="Q4R965"/>
<dbReference type="STRING" id="9541.ENSMFAP00000025851"/>
<dbReference type="Ensembl" id="ENSMFAT00000033946.2">
    <property type="protein sequence ID" value="ENSMFAP00000025794.1"/>
    <property type="gene ID" value="ENSMFAG00000044371.2"/>
</dbReference>
<dbReference type="GeneID" id="101926767"/>
<dbReference type="CTD" id="6729"/>
<dbReference type="VEuPathDB" id="HostDB:ENSMFAG00000044371"/>
<dbReference type="eggNOG" id="KOG0780">
    <property type="taxonomic scope" value="Eukaryota"/>
</dbReference>
<dbReference type="GeneTree" id="ENSGT00550000074824"/>
<dbReference type="OMA" id="GMTGQDA"/>
<dbReference type="Proteomes" id="UP000233100">
    <property type="component" value="Chromosome 7"/>
</dbReference>
<dbReference type="Bgee" id="ENSMFAG00000044371">
    <property type="expression patterns" value="Expressed in pituitary gland and 13 other cell types or tissues"/>
</dbReference>
<dbReference type="GO" id="GO:0005829">
    <property type="term" value="C:cytosol"/>
    <property type="evidence" value="ECO:0007669"/>
    <property type="project" value="TreeGrafter"/>
</dbReference>
<dbReference type="GO" id="GO:0005783">
    <property type="term" value="C:endoplasmic reticulum"/>
    <property type="evidence" value="ECO:0007669"/>
    <property type="project" value="UniProtKB-SubCell"/>
</dbReference>
<dbReference type="GO" id="GO:0016607">
    <property type="term" value="C:nuclear speck"/>
    <property type="evidence" value="ECO:0007669"/>
    <property type="project" value="UniProtKB-SubCell"/>
</dbReference>
<dbReference type="GO" id="GO:0005634">
    <property type="term" value="C:nucleus"/>
    <property type="evidence" value="ECO:0000250"/>
    <property type="project" value="UniProtKB"/>
</dbReference>
<dbReference type="GO" id="GO:0005786">
    <property type="term" value="C:signal recognition particle, endoplasmic reticulum targeting"/>
    <property type="evidence" value="ECO:0000250"/>
    <property type="project" value="UniProtKB"/>
</dbReference>
<dbReference type="GO" id="GO:0008312">
    <property type="term" value="F:7S RNA binding"/>
    <property type="evidence" value="ECO:0000250"/>
    <property type="project" value="UniProtKB"/>
</dbReference>
<dbReference type="GO" id="GO:0016887">
    <property type="term" value="F:ATP hydrolysis activity"/>
    <property type="evidence" value="ECO:0007669"/>
    <property type="project" value="InterPro"/>
</dbReference>
<dbReference type="GO" id="GO:0030942">
    <property type="term" value="F:endoplasmic reticulum signal peptide binding"/>
    <property type="evidence" value="ECO:0000250"/>
    <property type="project" value="UniProtKB"/>
</dbReference>
<dbReference type="GO" id="GO:0019003">
    <property type="term" value="F:GDP binding"/>
    <property type="evidence" value="ECO:0000250"/>
    <property type="project" value="UniProtKB"/>
</dbReference>
<dbReference type="GO" id="GO:0005525">
    <property type="term" value="F:GTP binding"/>
    <property type="evidence" value="ECO:0000250"/>
    <property type="project" value="UniProtKB"/>
</dbReference>
<dbReference type="GO" id="GO:0003924">
    <property type="term" value="F:GTPase activity"/>
    <property type="evidence" value="ECO:0007669"/>
    <property type="project" value="InterPro"/>
</dbReference>
<dbReference type="GO" id="GO:0045047">
    <property type="term" value="P:protein targeting to ER"/>
    <property type="evidence" value="ECO:0000250"/>
    <property type="project" value="UniProtKB"/>
</dbReference>
<dbReference type="GO" id="GO:0006616">
    <property type="term" value="P:SRP-dependent cotranslational protein targeting to membrane, translocation"/>
    <property type="evidence" value="ECO:0007669"/>
    <property type="project" value="TreeGrafter"/>
</dbReference>
<dbReference type="CDD" id="cd17875">
    <property type="entry name" value="SRP54_G"/>
    <property type="match status" value="1"/>
</dbReference>
<dbReference type="FunFam" id="1.10.260.30:FF:000002">
    <property type="entry name" value="Signal recognition particle 54 kDa protein"/>
    <property type="match status" value="1"/>
</dbReference>
<dbReference type="FunFam" id="1.20.120.140:FF:000003">
    <property type="entry name" value="Signal recognition particle 54 kDa protein"/>
    <property type="match status" value="1"/>
</dbReference>
<dbReference type="FunFam" id="3.40.50.300:FF:000022">
    <property type="entry name" value="Signal recognition particle 54 kDa subunit"/>
    <property type="match status" value="1"/>
</dbReference>
<dbReference type="Gene3D" id="3.40.50.300">
    <property type="entry name" value="P-loop containing nucleotide triphosphate hydrolases"/>
    <property type="match status" value="1"/>
</dbReference>
<dbReference type="Gene3D" id="1.20.120.140">
    <property type="entry name" value="Signal recognition particle SRP54, nucleotide-binding domain"/>
    <property type="match status" value="1"/>
</dbReference>
<dbReference type="Gene3D" id="1.10.260.30">
    <property type="entry name" value="Signal recognition particle, SRP54 subunit, M-domain"/>
    <property type="match status" value="1"/>
</dbReference>
<dbReference type="HAMAP" id="MF_00306">
    <property type="entry name" value="SRP54"/>
    <property type="match status" value="1"/>
</dbReference>
<dbReference type="InterPro" id="IPR003593">
    <property type="entry name" value="AAA+_ATPase"/>
</dbReference>
<dbReference type="InterPro" id="IPR027417">
    <property type="entry name" value="P-loop_NTPase"/>
</dbReference>
<dbReference type="InterPro" id="IPR036891">
    <property type="entry name" value="Signal_recog_part_SRP54_M_sf"/>
</dbReference>
<dbReference type="InterPro" id="IPR013822">
    <property type="entry name" value="Signal_recog_particl_SRP54_hlx"/>
</dbReference>
<dbReference type="InterPro" id="IPR004125">
    <property type="entry name" value="Signal_recog_particle_SRP54_M"/>
</dbReference>
<dbReference type="InterPro" id="IPR036225">
    <property type="entry name" value="SRP/SRP_N"/>
</dbReference>
<dbReference type="InterPro" id="IPR022941">
    <property type="entry name" value="SRP54"/>
</dbReference>
<dbReference type="InterPro" id="IPR006325">
    <property type="entry name" value="SRP54_euk"/>
</dbReference>
<dbReference type="InterPro" id="IPR000897">
    <property type="entry name" value="SRP54_GTPase_dom"/>
</dbReference>
<dbReference type="InterPro" id="IPR042101">
    <property type="entry name" value="SRP54_N_sf"/>
</dbReference>
<dbReference type="NCBIfam" id="TIGR01425">
    <property type="entry name" value="SRP54_euk"/>
    <property type="match status" value="1"/>
</dbReference>
<dbReference type="PANTHER" id="PTHR11564">
    <property type="entry name" value="SIGNAL RECOGNITION PARTICLE 54K PROTEIN SRP54"/>
    <property type="match status" value="1"/>
</dbReference>
<dbReference type="PANTHER" id="PTHR11564:SF5">
    <property type="entry name" value="SIGNAL RECOGNITION PARTICLE SUBUNIT SRP54"/>
    <property type="match status" value="1"/>
</dbReference>
<dbReference type="Pfam" id="PF00448">
    <property type="entry name" value="SRP54"/>
    <property type="match status" value="1"/>
</dbReference>
<dbReference type="Pfam" id="PF02881">
    <property type="entry name" value="SRP54_N"/>
    <property type="match status" value="1"/>
</dbReference>
<dbReference type="Pfam" id="PF02978">
    <property type="entry name" value="SRP_SPB"/>
    <property type="match status" value="1"/>
</dbReference>
<dbReference type="SMART" id="SM00382">
    <property type="entry name" value="AAA"/>
    <property type="match status" value="1"/>
</dbReference>
<dbReference type="SMART" id="SM00962">
    <property type="entry name" value="SRP54"/>
    <property type="match status" value="1"/>
</dbReference>
<dbReference type="SMART" id="SM00963">
    <property type="entry name" value="SRP54_N"/>
    <property type="match status" value="1"/>
</dbReference>
<dbReference type="SUPFAM" id="SSF47364">
    <property type="entry name" value="Domain of the SRP/SRP receptor G-proteins"/>
    <property type="match status" value="1"/>
</dbReference>
<dbReference type="SUPFAM" id="SSF52540">
    <property type="entry name" value="P-loop containing nucleoside triphosphate hydrolases"/>
    <property type="match status" value="1"/>
</dbReference>
<dbReference type="SUPFAM" id="SSF47446">
    <property type="entry name" value="Signal peptide-binding domain"/>
    <property type="match status" value="1"/>
</dbReference>
<dbReference type="PROSITE" id="PS00300">
    <property type="entry name" value="SRP54"/>
    <property type="match status" value="1"/>
</dbReference>
<feature type="chain" id="PRO_0000101193" description="Signal recognition particle subunit SRP54">
    <location>
        <begin position="1"/>
        <end position="504"/>
    </location>
</feature>
<feature type="region of interest" description="NG-domain" evidence="3">
    <location>
        <begin position="1"/>
        <end position="295"/>
    </location>
</feature>
<feature type="region of interest" description="M-domain" evidence="3">
    <location>
        <begin position="296"/>
        <end position="504"/>
    </location>
</feature>
<feature type="binding site" evidence="1">
    <location>
        <begin position="108"/>
        <end position="115"/>
    </location>
    <ligand>
        <name>GTP</name>
        <dbReference type="ChEBI" id="CHEBI:37565"/>
    </ligand>
</feature>
<feature type="binding site" evidence="1">
    <location>
        <begin position="190"/>
        <end position="194"/>
    </location>
    <ligand>
        <name>GTP</name>
        <dbReference type="ChEBI" id="CHEBI:37565"/>
    </ligand>
</feature>
<feature type="binding site" evidence="1">
    <location>
        <begin position="248"/>
        <end position="251"/>
    </location>
    <ligand>
        <name>GTP</name>
        <dbReference type="ChEBI" id="CHEBI:37565"/>
    </ligand>
</feature>
<accession>Q4R965</accession>
<reference key="1">
    <citation type="submission" date="2005-06" db="EMBL/GenBank/DDBJ databases">
        <title>DNA sequences of macaque genes expressed in brain or testis and its evolutionary implications.</title>
        <authorList>
            <consortium name="International consortium for macaque cDNA sequencing and analysis"/>
        </authorList>
    </citation>
    <scope>NUCLEOTIDE SEQUENCE [LARGE SCALE MRNA]</scope>
    <source>
        <tissue>Testis</tissue>
    </source>
</reference>
<keyword id="KW-0963">Cytoplasm</keyword>
<keyword id="KW-0256">Endoplasmic reticulum</keyword>
<keyword id="KW-0342">GTP-binding</keyword>
<keyword id="KW-0378">Hydrolase</keyword>
<keyword id="KW-0547">Nucleotide-binding</keyword>
<keyword id="KW-0539">Nucleus</keyword>
<keyword id="KW-1185">Reference proteome</keyword>
<keyword id="KW-0687">Ribonucleoprotein</keyword>
<keyword id="KW-0694">RNA-binding</keyword>
<keyword id="KW-0733">Signal recognition particle</keyword>
<proteinExistence type="evidence at transcript level"/>
<protein>
    <recommendedName>
        <fullName>Signal recognition particle subunit SRP54</fullName>
        <ecNumber evidence="3">3.6.5.4</ecNumber>
    </recommendedName>
    <alternativeName>
        <fullName>Signal recognition particle 54 kDa protein</fullName>
    </alternativeName>
</protein>
<organism>
    <name type="scientific">Macaca fascicularis</name>
    <name type="common">Crab-eating macaque</name>
    <name type="synonym">Cynomolgus monkey</name>
    <dbReference type="NCBI Taxonomy" id="9541"/>
    <lineage>
        <taxon>Eukaryota</taxon>
        <taxon>Metazoa</taxon>
        <taxon>Chordata</taxon>
        <taxon>Craniata</taxon>
        <taxon>Vertebrata</taxon>
        <taxon>Euteleostomi</taxon>
        <taxon>Mammalia</taxon>
        <taxon>Eutheria</taxon>
        <taxon>Euarchontoglires</taxon>
        <taxon>Primates</taxon>
        <taxon>Haplorrhini</taxon>
        <taxon>Catarrhini</taxon>
        <taxon>Cercopithecidae</taxon>
        <taxon>Cercopithecinae</taxon>
        <taxon>Macaca</taxon>
    </lineage>
</organism>
<name>SRP54_MACFA</name>
<comment type="function">
    <text evidence="2 3">Component of the signal recognition particle (SRP) complex, a ribonucleoprotein complex that mediates the cotranslational targeting of secretory and membrane proteins to the endoplasmic reticulum (ER) (By similarity). As part of the SRP complex, associates with the SRP receptor (SR) component SRPRA to target secretory proteins to the endoplasmic reticulum membrane (By similarity). Binds to the signal sequence of presecretory proteins when they emerge from the ribosomes (By similarity). Displays basal GTPase activity, and stimulates reciprocal GTPase activation of the SR subunit SRPRA (By similarity). Forms a guanosine 5'-triphosphate (GTP)-dependent complex with the SR subunit SRPRA (By similarity). SR compaction and GTPase mediated rearrangement of SR drive SRP-mediated cotranslational protein translocation into the ER (By similarity). Requires the presence of SRP9/SRP14 and/or SRP19 to stably interact with RNA (By similarity). Plays a role in proliferation and differentiation of granulocytic cells, neutrophils migration capacity and exocrine pancreas development (By similarity).</text>
</comment>
<comment type="catalytic activity">
    <reaction evidence="3">
        <text>GTP + H2O = GDP + phosphate + H(+)</text>
        <dbReference type="Rhea" id="RHEA:19669"/>
        <dbReference type="ChEBI" id="CHEBI:15377"/>
        <dbReference type="ChEBI" id="CHEBI:15378"/>
        <dbReference type="ChEBI" id="CHEBI:37565"/>
        <dbReference type="ChEBI" id="CHEBI:43474"/>
        <dbReference type="ChEBI" id="CHEBI:58189"/>
        <dbReference type="EC" id="3.6.5.4"/>
    </reaction>
    <physiologicalReaction direction="left-to-right" evidence="3">
        <dbReference type="Rhea" id="RHEA:19670"/>
    </physiologicalReaction>
</comment>
<comment type="subunit">
    <text evidence="3">Component of a signal recognition particle (SRP) complex that consists of a 7SL RNA molecule of 300 nucleotides and six protein subunits: SRP72, SRP68, SRP54, SRP19, SRP14 and SRP9 (By similarity). Interacts with RNPS1 (By similarity). Interacts with the SRP receptor subunit SRPRA (By similarity).</text>
</comment>
<comment type="subcellular location">
    <subcellularLocation>
        <location evidence="3">Nucleus speckle</location>
    </subcellularLocation>
    <subcellularLocation>
        <location evidence="3">Cytoplasm</location>
    </subcellularLocation>
    <subcellularLocation>
        <location evidence="3">Endoplasmic reticulum</location>
    </subcellularLocation>
</comment>
<comment type="domain">
    <text evidence="3">The NG domain, also named G domain, is a special guanosine triphosphatase (GTPase) domain, which binds GTP and forms a guanosine 5'-triphosphate (GTP)-dependent complex with a homologous NG domain in the SRP receptor subunit SRPRA (By similarity). The two NG domains undergo cooperative rearrangements upon their assembly, which culminate in the reciprocal activation of the GTPase activity of one another (By similarity). SRP receptor compaction upon binding with cargo-loaded SRP and GTPase rearrangement drive SRP-mediated cotranslational protein translocation into the ER (By similarity).</text>
</comment>
<comment type="domain">
    <text evidence="3">The M domain binds the 7SL RNA in presence of SRP19 and binds the signal sequence of presecretory proteins.</text>
</comment>
<comment type="similarity">
    <text evidence="4">Belongs to the GTP-binding SRP family. SRP54 subfamily.</text>
</comment>
<gene>
    <name type="primary">SRP54</name>
    <name type="ORF">QtsA-10644</name>
</gene>
<evidence type="ECO:0000250" key="1"/>
<evidence type="ECO:0000250" key="2">
    <source>
        <dbReference type="UniProtKB" id="P61010"/>
    </source>
</evidence>
<evidence type="ECO:0000250" key="3">
    <source>
        <dbReference type="UniProtKB" id="P61011"/>
    </source>
</evidence>
<evidence type="ECO:0000305" key="4"/>
<sequence length="504" mass="55705">MVLADLGRKITSALRSLSNATIINEEVLNAMLKEVCTALLEADVNIKLVKQLRENVKSAIDLEEMASGLNKRKMIQHAVFKELVKLVDPGVKAWTPTKGKQNVIMFVGLQGSGKTTTCSKLAYYYQRKGWKTCLICADTFRAGAFDQLKQNATKARIPFYGSYTEMDPVIIASEGVEKFKNENFEIIIVDTSGRHKQEDSLFEEMLQVANAIQPDNIVYVMDASIGQACEAQAKAFKDKVDVASVIVTKLDGHAKGGGALSAVAATKSPIIFIGTGEHIDDFEPFKTQPFISKLLGMGDIEGLIDKVNELKLDDNEALIEKLKHGQFTLRDMYEQFQNIMKMGPFSQILGMIPGFGTDFMSKGNEQESMARLKKLMTIMDSMNDQELDSTDGAKVFSKQPGRIQRVARGSGVSTRDVQELLTQYTKFAQMVKKMGGIKGLFKGGDMSKNVSQSQMAKLNQQMAKMMDPRVLHHMGGMAGLQSMMRQFQQGAAGNMKGMMGFNNM</sequence>